<sequence length="65" mass="7345">LTCVTSKSIFGITTEDCPDGQNLCFKRRHYVVPKIYDITRGCVATCPIPENYDSIHCCKTDKCNE</sequence>
<evidence type="ECO:0000250" key="1">
    <source>
        <dbReference type="UniProtKB" id="P60301"/>
    </source>
</evidence>
<evidence type="ECO:0000269" key="2">
    <source>
    </source>
</evidence>
<evidence type="ECO:0000269" key="3">
    <source>
    </source>
</evidence>
<evidence type="ECO:0000269" key="4">
    <source>
    </source>
</evidence>
<evidence type="ECO:0000269" key="5">
    <source>
    </source>
</evidence>
<evidence type="ECO:0000303" key="6">
    <source>
    </source>
</evidence>
<evidence type="ECO:0000305" key="7"/>
<evidence type="ECO:0000305" key="8">
    <source>
    </source>
</evidence>
<evidence type="ECO:0000305" key="9">
    <source>
    </source>
</evidence>
<name>3SIMB_DENPO</name>
<comment type="function">
    <text evidence="2 3">This toxin shows activities on different G-protein coupled receptors. It is highly potent on various alpha-adrenoceptors (ADRA) (subnanomolar affinity for ADRA1A). Order of potency is the following: ADRA1A &gt; ADRA1B &gt; ADRA1D &gt; ADRA2C (PubMed:23648423). It is also found to reversibly bind to muscarinic acetylcholine receptors (CHRM), but the affinity is much weaker (CHRM1 and CHRM2, Ki&gt;1 uM; CHRM3, Ki=140 nM; CHRM4, Ki=120 nM; CHRM5, Ki=350 nM) (PubMed:10978757, PubMed:23648423, PubMed:8536706).</text>
</comment>
<comment type="subcellular location">
    <subcellularLocation>
        <location evidence="4 5">Secreted</location>
    </subcellularLocation>
</comment>
<comment type="tissue specificity">
    <text evidence="8 9">Expressed by the venom gland.</text>
</comment>
<comment type="miscellaneous">
    <text evidence="7">Is classified as a P-type cytotoxin, since a proline residue stands at position 33 (Pro-31 in standard classification).</text>
</comment>
<comment type="similarity">
    <text evidence="7">Belongs to the three-finger toxin family. Short-chain subfamily. Aminergic toxin sub-subfamily.</text>
</comment>
<organism>
    <name type="scientific">Dendroaspis polylepis polylepis</name>
    <name type="common">Black mamba</name>
    <dbReference type="NCBI Taxonomy" id="8620"/>
    <lineage>
        <taxon>Eukaryota</taxon>
        <taxon>Metazoa</taxon>
        <taxon>Chordata</taxon>
        <taxon>Craniata</taxon>
        <taxon>Vertebrata</taxon>
        <taxon>Euteleostomi</taxon>
        <taxon>Lepidosauria</taxon>
        <taxon>Squamata</taxon>
        <taxon>Bifurcata</taxon>
        <taxon>Unidentata</taxon>
        <taxon>Episquamata</taxon>
        <taxon>Toxicofera</taxon>
        <taxon>Serpentes</taxon>
        <taxon>Colubroidea</taxon>
        <taxon>Elapidae</taxon>
        <taxon>Elapinae</taxon>
        <taxon>Dendroaspis</taxon>
    </lineage>
</organism>
<keyword id="KW-0903">Direct protein sequencing</keyword>
<keyword id="KW-1015">Disulfide bond</keyword>
<keyword id="KW-1213">G-protein coupled receptor impairing toxin</keyword>
<keyword id="KW-0528">Neurotoxin</keyword>
<keyword id="KW-0629">Postsynaptic neurotoxin</keyword>
<keyword id="KW-0964">Secreted</keyword>
<keyword id="KW-0800">Toxin</keyword>
<protein>
    <recommendedName>
        <fullName>Adrenergic toxin rho-elapitoxin-Dp1a</fullName>
        <shortName>rho-EPTX-Dp1a</shortName>
    </recommendedName>
    <alternativeName>
        <fullName evidence="6">Muscarinic toxin beta</fullName>
        <shortName evidence="6">MT-beta</shortName>
    </alternativeName>
</protein>
<reference key="1">
    <citation type="journal article" date="1995" name="Eur. J. Biochem.">
        <title>Muscarinic toxins from the black mamba Dendroaspis polylepis.</title>
        <authorList>
            <person name="Jolkkonen M."/>
            <person name="van Giersbergen P.L.M."/>
            <person name="Hellman U."/>
            <person name="Wernstedt C."/>
            <person name="Oras A."/>
            <person name="Satyapan N."/>
            <person name="Adem A."/>
            <person name="Karlsson E."/>
        </authorList>
    </citation>
    <scope>PROTEIN SEQUENCE</scope>
    <scope>SUBCELLULAR LOCATION</scope>
    <scope>FUNCTION</scope>
    <source>
        <tissue>Venom</tissue>
    </source>
</reference>
<reference key="2">
    <citation type="journal article" date="1994" name="Ann. N. Y. Acad. Sci.">
        <title>Protein toxins that bind to muscarinic acetylcholine receptors.</title>
        <authorList>
            <person name="Karlsson E."/>
            <person name="Jolkkonen M."/>
            <person name="Satyapan N."/>
            <person name="Adem A."/>
            <person name="Kumlin E."/>
            <person name="Hellman U."/>
            <person name="Wernstedt C."/>
        </authorList>
    </citation>
    <scope>PROTEIN SEQUENCE</scope>
    <scope>SUBCELLULAR LOCATION</scope>
    <source>
        <tissue>Venom</tissue>
    </source>
</reference>
<reference key="3">
    <citation type="journal article" date="2001" name="Toxicon">
        <title>Kinetic evidence for different mechanisms of interaction of black mamba toxins MT alpha and MT beta with muscarinic receptors.</title>
        <authorList>
            <person name="Jolkkonen M."/>
            <person name="Oras A."/>
            <person name="Toomela T."/>
            <person name="Karlsson E."/>
            <person name="Jarv J."/>
            <person name="Akerman K.E."/>
        </authorList>
    </citation>
    <scope>MECHANISM OF BINDING</scope>
    <scope>FUNCTION</scope>
</reference>
<reference key="4">
    <citation type="journal article" date="2013" name="Toxicon">
        <title>New alpha-adrenergic property for synthetic MTbeta and CM-3 three-finger fold toxins from black mamba.</title>
        <authorList>
            <person name="Blanchet G."/>
            <person name="Upert G."/>
            <person name="Mourier G."/>
            <person name="Gilquin B."/>
            <person name="Gilles N."/>
            <person name="Servent D."/>
        </authorList>
    </citation>
    <scope>FUNCTION</scope>
    <scope>SYNTHESIS</scope>
</reference>
<feature type="chain" id="PRO_0000093649" description="Adrenergic toxin rho-elapitoxin-Dp1a" evidence="4 5">
    <location>
        <begin position="1"/>
        <end position="65"/>
    </location>
</feature>
<feature type="disulfide bond" evidence="1">
    <location>
        <begin position="3"/>
        <end position="24"/>
    </location>
</feature>
<feature type="disulfide bond" evidence="1">
    <location>
        <begin position="17"/>
        <end position="42"/>
    </location>
</feature>
<feature type="disulfide bond" evidence="1">
    <location>
        <begin position="46"/>
        <end position="57"/>
    </location>
</feature>
<feature type="disulfide bond" evidence="1">
    <location>
        <begin position="58"/>
        <end position="63"/>
    </location>
</feature>
<dbReference type="PIR" id="S67985">
    <property type="entry name" value="S67985"/>
</dbReference>
<dbReference type="SMR" id="P80495"/>
<dbReference type="GO" id="GO:0005576">
    <property type="term" value="C:extracellular region"/>
    <property type="evidence" value="ECO:0007669"/>
    <property type="project" value="UniProtKB-SubCell"/>
</dbReference>
<dbReference type="GO" id="GO:0090729">
    <property type="term" value="F:toxin activity"/>
    <property type="evidence" value="ECO:0007669"/>
    <property type="project" value="UniProtKB-KW"/>
</dbReference>
<dbReference type="CDD" id="cd00206">
    <property type="entry name" value="TFP_snake_toxin"/>
    <property type="match status" value="1"/>
</dbReference>
<dbReference type="FunFam" id="2.10.60.10:FF:000024">
    <property type="entry name" value="Cytotoxin 1"/>
    <property type="match status" value="1"/>
</dbReference>
<dbReference type="Gene3D" id="2.10.60.10">
    <property type="entry name" value="CD59"/>
    <property type="match status" value="1"/>
</dbReference>
<dbReference type="InterPro" id="IPR003572">
    <property type="entry name" value="Cytotoxin_Cobra"/>
</dbReference>
<dbReference type="InterPro" id="IPR003571">
    <property type="entry name" value="Snake_3FTx"/>
</dbReference>
<dbReference type="InterPro" id="IPR045860">
    <property type="entry name" value="Snake_toxin-like_sf"/>
</dbReference>
<dbReference type="InterPro" id="IPR018354">
    <property type="entry name" value="Snake_toxin_con_site"/>
</dbReference>
<dbReference type="InterPro" id="IPR054131">
    <property type="entry name" value="Toxin_cobra-type"/>
</dbReference>
<dbReference type="Pfam" id="PF21947">
    <property type="entry name" value="Toxin_cobra-type"/>
    <property type="match status" value="1"/>
</dbReference>
<dbReference type="PRINTS" id="PR00282">
    <property type="entry name" value="CYTOTOXIN"/>
</dbReference>
<dbReference type="SUPFAM" id="SSF57302">
    <property type="entry name" value="Snake toxin-like"/>
    <property type="match status" value="1"/>
</dbReference>
<dbReference type="PROSITE" id="PS00272">
    <property type="entry name" value="SNAKE_TOXIN"/>
    <property type="match status" value="1"/>
</dbReference>
<accession>P80495</accession>
<proteinExistence type="evidence at protein level"/>